<organism>
    <name type="scientific">Latilactobacillus sakei subsp. sakei (strain 23K)</name>
    <name type="common">Lactobacillus sakei subsp. sakei</name>
    <dbReference type="NCBI Taxonomy" id="314315"/>
    <lineage>
        <taxon>Bacteria</taxon>
        <taxon>Bacillati</taxon>
        <taxon>Bacillota</taxon>
        <taxon>Bacilli</taxon>
        <taxon>Lactobacillales</taxon>
        <taxon>Lactobacillaceae</taxon>
        <taxon>Latilactobacillus</taxon>
    </lineage>
</organism>
<dbReference type="EMBL" id="CR936503">
    <property type="protein sequence ID" value="CAI54306.1"/>
    <property type="molecule type" value="Genomic_DNA"/>
</dbReference>
<dbReference type="RefSeq" id="WP_011373722.1">
    <property type="nucleotide sequence ID" value="NC_007576.1"/>
</dbReference>
<dbReference type="SMR" id="Q38ZS1"/>
<dbReference type="STRING" id="314315.LCA_0004"/>
<dbReference type="KEGG" id="lsa:LCA_0004"/>
<dbReference type="eggNOG" id="COG1195">
    <property type="taxonomic scope" value="Bacteria"/>
</dbReference>
<dbReference type="HOGENOM" id="CLU_040267_0_1_9"/>
<dbReference type="OrthoDB" id="9803889at2"/>
<dbReference type="Proteomes" id="UP000002707">
    <property type="component" value="Chromosome"/>
</dbReference>
<dbReference type="GO" id="GO:0005737">
    <property type="term" value="C:cytoplasm"/>
    <property type="evidence" value="ECO:0007669"/>
    <property type="project" value="UniProtKB-SubCell"/>
</dbReference>
<dbReference type="GO" id="GO:0005524">
    <property type="term" value="F:ATP binding"/>
    <property type="evidence" value="ECO:0007669"/>
    <property type="project" value="UniProtKB-UniRule"/>
</dbReference>
<dbReference type="GO" id="GO:0003697">
    <property type="term" value="F:single-stranded DNA binding"/>
    <property type="evidence" value="ECO:0007669"/>
    <property type="project" value="UniProtKB-UniRule"/>
</dbReference>
<dbReference type="GO" id="GO:0006260">
    <property type="term" value="P:DNA replication"/>
    <property type="evidence" value="ECO:0007669"/>
    <property type="project" value="UniProtKB-UniRule"/>
</dbReference>
<dbReference type="GO" id="GO:0000731">
    <property type="term" value="P:DNA synthesis involved in DNA repair"/>
    <property type="evidence" value="ECO:0007669"/>
    <property type="project" value="TreeGrafter"/>
</dbReference>
<dbReference type="GO" id="GO:0006302">
    <property type="term" value="P:double-strand break repair"/>
    <property type="evidence" value="ECO:0007669"/>
    <property type="project" value="TreeGrafter"/>
</dbReference>
<dbReference type="GO" id="GO:0009432">
    <property type="term" value="P:SOS response"/>
    <property type="evidence" value="ECO:0007669"/>
    <property type="project" value="UniProtKB-UniRule"/>
</dbReference>
<dbReference type="CDD" id="cd03242">
    <property type="entry name" value="ABC_RecF"/>
    <property type="match status" value="1"/>
</dbReference>
<dbReference type="FunFam" id="1.20.1050.90:FF:000002">
    <property type="entry name" value="DNA replication and repair protein RecF"/>
    <property type="match status" value="1"/>
</dbReference>
<dbReference type="Gene3D" id="3.40.50.300">
    <property type="entry name" value="P-loop containing nucleotide triphosphate hydrolases"/>
    <property type="match status" value="1"/>
</dbReference>
<dbReference type="Gene3D" id="1.20.1050.90">
    <property type="entry name" value="RecF/RecN/SMC, N-terminal domain"/>
    <property type="match status" value="1"/>
</dbReference>
<dbReference type="HAMAP" id="MF_00365">
    <property type="entry name" value="RecF"/>
    <property type="match status" value="1"/>
</dbReference>
<dbReference type="InterPro" id="IPR001238">
    <property type="entry name" value="DNA-binding_RecF"/>
</dbReference>
<dbReference type="InterPro" id="IPR018078">
    <property type="entry name" value="DNA-binding_RecF_CS"/>
</dbReference>
<dbReference type="InterPro" id="IPR027417">
    <property type="entry name" value="P-loop_NTPase"/>
</dbReference>
<dbReference type="InterPro" id="IPR003395">
    <property type="entry name" value="RecF/RecN/SMC_N"/>
</dbReference>
<dbReference type="InterPro" id="IPR042174">
    <property type="entry name" value="RecF_2"/>
</dbReference>
<dbReference type="NCBIfam" id="TIGR00611">
    <property type="entry name" value="recf"/>
    <property type="match status" value="1"/>
</dbReference>
<dbReference type="PANTHER" id="PTHR32182">
    <property type="entry name" value="DNA REPLICATION AND REPAIR PROTEIN RECF"/>
    <property type="match status" value="1"/>
</dbReference>
<dbReference type="PANTHER" id="PTHR32182:SF0">
    <property type="entry name" value="DNA REPLICATION AND REPAIR PROTEIN RECF"/>
    <property type="match status" value="1"/>
</dbReference>
<dbReference type="Pfam" id="PF02463">
    <property type="entry name" value="SMC_N"/>
    <property type="match status" value="1"/>
</dbReference>
<dbReference type="SUPFAM" id="SSF52540">
    <property type="entry name" value="P-loop containing nucleoside triphosphate hydrolases"/>
    <property type="match status" value="1"/>
</dbReference>
<dbReference type="PROSITE" id="PS00617">
    <property type="entry name" value="RECF_1"/>
    <property type="match status" value="1"/>
</dbReference>
<dbReference type="PROSITE" id="PS00618">
    <property type="entry name" value="RECF_2"/>
    <property type="match status" value="1"/>
</dbReference>
<feature type="chain" id="PRO_0000236125" description="DNA replication and repair protein RecF">
    <location>
        <begin position="1"/>
        <end position="375"/>
    </location>
</feature>
<feature type="binding site" evidence="1">
    <location>
        <begin position="30"/>
        <end position="37"/>
    </location>
    <ligand>
        <name>ATP</name>
        <dbReference type="ChEBI" id="CHEBI:30616"/>
    </ligand>
</feature>
<accession>Q38ZS1</accession>
<keyword id="KW-0067">ATP-binding</keyword>
<keyword id="KW-0963">Cytoplasm</keyword>
<keyword id="KW-0227">DNA damage</keyword>
<keyword id="KW-0234">DNA repair</keyword>
<keyword id="KW-0235">DNA replication</keyword>
<keyword id="KW-0238">DNA-binding</keyword>
<keyword id="KW-0547">Nucleotide-binding</keyword>
<keyword id="KW-1185">Reference proteome</keyword>
<keyword id="KW-0742">SOS response</keyword>
<sequence length="375" mass="43246">MYLSELQLNHYRNYESVDVHFSPDTNVLIGENAQGKTNLLEAIYVLALARSHRTNTDRELIQWHEDFAKITGLVQRSAGKTPLELVLSQKGKKAKVNHLEQAKLSQYIGQLNVVLFAPEDLNIVKGSPAVRRHFIDMEFGQMSSKYLYNISQYKSILKQRNQYLKQLQRRQAKDLVYLGVLSDQLAAYGAEVTVARRQFLQQMEKWAQKLHQEITKDREVLTFKYQSQIPEEQLDQSVEELYQQFQTLYEKQQIREVEQGTTLIGPHRDDVQFLVNDKDVQAFGSQGQQRTTALSVKLAEIDLMKAQTGEYPILLLDDVLSELDDLRQTHLLKTFQNKVQTFLTTTSLENVKKEIIATPRVFTVTNGVVIEEQAE</sequence>
<proteinExistence type="inferred from homology"/>
<gene>
    <name evidence="1" type="primary">recF</name>
    <name type="ordered locus">LCA_0004</name>
</gene>
<name>RECF_LATSS</name>
<evidence type="ECO:0000255" key="1">
    <source>
        <dbReference type="HAMAP-Rule" id="MF_00365"/>
    </source>
</evidence>
<reference key="1">
    <citation type="journal article" date="2005" name="Nat. Biotechnol.">
        <title>The complete genome sequence of the meat-borne lactic acid bacterium Lactobacillus sakei 23K.</title>
        <authorList>
            <person name="Chaillou S."/>
            <person name="Champomier-Verges M.-C."/>
            <person name="Cornet M."/>
            <person name="Crutz-Le Coq A.-M."/>
            <person name="Dudez A.-M."/>
            <person name="Martin V."/>
            <person name="Beaufils S."/>
            <person name="Darbon-Rongere E."/>
            <person name="Bossy R."/>
            <person name="Loux V."/>
            <person name="Zagorec M."/>
        </authorList>
    </citation>
    <scope>NUCLEOTIDE SEQUENCE [LARGE SCALE GENOMIC DNA]</scope>
    <source>
        <strain>23K</strain>
    </source>
</reference>
<comment type="function">
    <text evidence="1">The RecF protein is involved in DNA metabolism; it is required for DNA replication and normal SOS inducibility. RecF binds preferentially to single-stranded, linear DNA. It also seems to bind ATP.</text>
</comment>
<comment type="subcellular location">
    <subcellularLocation>
        <location evidence="1">Cytoplasm</location>
    </subcellularLocation>
</comment>
<comment type="similarity">
    <text evidence="1">Belongs to the RecF family.</text>
</comment>
<protein>
    <recommendedName>
        <fullName evidence="1">DNA replication and repair protein RecF</fullName>
    </recommendedName>
</protein>